<protein>
    <recommendedName>
        <fullName>Penaeidin-4a</fullName>
        <shortName>Pen-4a</shortName>
    </recommendedName>
</protein>
<proteinExistence type="inferred from homology"/>
<sequence length="67" mass="7397">MRLVVCLVFLASFALVCQGHSSGYTRPLPKPSRPIFIRPIGCDVCYGIPSSTARLCCFRYGDCCHRG</sequence>
<name>PEN4A_PENVA</name>
<feature type="signal peptide" evidence="2">
    <location>
        <begin position="1"/>
        <end position="19"/>
    </location>
</feature>
<feature type="chain" id="PRO_0000023520" description="Penaeidin-4a">
    <location>
        <begin position="20"/>
        <end position="66"/>
    </location>
</feature>
<feature type="modified residue" description="Arginine amide" evidence="1">
    <location>
        <position position="66"/>
    </location>
</feature>
<feature type="disulfide bond" evidence="1">
    <location>
        <begin position="42"/>
        <end position="56"/>
    </location>
</feature>
<feature type="disulfide bond" evidence="1">
    <location>
        <begin position="45"/>
        <end position="63"/>
    </location>
</feature>
<feature type="disulfide bond" evidence="1">
    <location>
        <begin position="57"/>
        <end position="64"/>
    </location>
</feature>
<comment type="function">
    <text evidence="1">Antibacterial and antifungal activity. Presents chitin-binding activity (By similarity).</text>
</comment>
<comment type="subcellular location">
    <subcellularLocation>
        <location>Cytoplasmic granule</location>
    </subcellularLocation>
    <text>Cytoplasmic granules of hemocytes and to a lesser extent in small granules of hemocytes.</text>
</comment>
<comment type="similarity">
    <text evidence="3">Belongs to the penaeidin family.</text>
</comment>
<organism>
    <name type="scientific">Penaeus vannamei</name>
    <name type="common">Whiteleg shrimp</name>
    <name type="synonym">Litopenaeus vannamei</name>
    <dbReference type="NCBI Taxonomy" id="6689"/>
    <lineage>
        <taxon>Eukaryota</taxon>
        <taxon>Metazoa</taxon>
        <taxon>Ecdysozoa</taxon>
        <taxon>Arthropoda</taxon>
        <taxon>Crustacea</taxon>
        <taxon>Multicrustacea</taxon>
        <taxon>Malacostraca</taxon>
        <taxon>Eumalacostraca</taxon>
        <taxon>Eucarida</taxon>
        <taxon>Decapoda</taxon>
        <taxon>Dendrobranchiata</taxon>
        <taxon>Penaeoidea</taxon>
        <taxon>Penaeidae</taxon>
        <taxon>Penaeus</taxon>
    </lineage>
</organism>
<keyword id="KW-0027">Amidation</keyword>
<keyword id="KW-0044">Antibiotic</keyword>
<keyword id="KW-0929">Antimicrobial</keyword>
<keyword id="KW-0147">Chitin-binding</keyword>
<keyword id="KW-1015">Disulfide bond</keyword>
<keyword id="KW-0295">Fungicide</keyword>
<keyword id="KW-0732">Signal</keyword>
<evidence type="ECO:0000250" key="1"/>
<evidence type="ECO:0000255" key="2"/>
<evidence type="ECO:0000305" key="3"/>
<reference key="1">
    <citation type="journal article" date="2002" name="Immunogenetics">
        <title>Diversity of the penaeidin antimicrobial peptides in two shrimp species.</title>
        <authorList>
            <person name="Cuthbertson B.J."/>
            <person name="Shepard E.F."/>
            <person name="Chapman R.W."/>
            <person name="Gross P.S."/>
        </authorList>
    </citation>
    <scope>NUCLEOTIDE SEQUENCE [MRNA]</scope>
    <source>
        <tissue>Hemocyte</tissue>
    </source>
</reference>
<accession>Q95NT0</accession>
<dbReference type="EMBL" id="AF390147">
    <property type="protein sequence ID" value="AAK77540.1"/>
    <property type="molecule type" value="mRNA"/>
</dbReference>
<dbReference type="SMR" id="Q95NT0"/>
<dbReference type="GO" id="GO:0005737">
    <property type="term" value="C:cytoplasm"/>
    <property type="evidence" value="ECO:0007669"/>
    <property type="project" value="InterPro"/>
</dbReference>
<dbReference type="GO" id="GO:0008061">
    <property type="term" value="F:chitin binding"/>
    <property type="evidence" value="ECO:0007669"/>
    <property type="project" value="UniProtKB-KW"/>
</dbReference>
<dbReference type="GO" id="GO:0042742">
    <property type="term" value="P:defense response to bacterium"/>
    <property type="evidence" value="ECO:0007669"/>
    <property type="project" value="UniProtKB-KW"/>
</dbReference>
<dbReference type="GO" id="GO:0050832">
    <property type="term" value="P:defense response to fungus"/>
    <property type="evidence" value="ECO:0007669"/>
    <property type="project" value="UniProtKB-KW"/>
</dbReference>
<dbReference type="GO" id="GO:0031640">
    <property type="term" value="P:killing of cells of another organism"/>
    <property type="evidence" value="ECO:0007669"/>
    <property type="project" value="UniProtKB-KW"/>
</dbReference>
<dbReference type="InterPro" id="IPR009226">
    <property type="entry name" value="Penaeidin"/>
</dbReference>
<dbReference type="Pfam" id="PF05927">
    <property type="entry name" value="Penaeidin"/>
    <property type="match status" value="1"/>
</dbReference>